<name>SYT_SALPA</name>
<accession>Q5PH96</accession>
<evidence type="ECO:0000255" key="1">
    <source>
        <dbReference type="HAMAP-Rule" id="MF_00184"/>
    </source>
</evidence>
<evidence type="ECO:0000255" key="2">
    <source>
        <dbReference type="PROSITE-ProRule" id="PRU01228"/>
    </source>
</evidence>
<comment type="function">
    <text evidence="1">Catalyzes the attachment of threonine to tRNA(Thr) in a two-step reaction: L-threonine is first activated by ATP to form Thr-AMP and then transferred to the acceptor end of tRNA(Thr). Also edits incorrectly charged L-seryl-tRNA(Thr).</text>
</comment>
<comment type="catalytic activity">
    <reaction evidence="1">
        <text>tRNA(Thr) + L-threonine + ATP = L-threonyl-tRNA(Thr) + AMP + diphosphate + H(+)</text>
        <dbReference type="Rhea" id="RHEA:24624"/>
        <dbReference type="Rhea" id="RHEA-COMP:9670"/>
        <dbReference type="Rhea" id="RHEA-COMP:9704"/>
        <dbReference type="ChEBI" id="CHEBI:15378"/>
        <dbReference type="ChEBI" id="CHEBI:30616"/>
        <dbReference type="ChEBI" id="CHEBI:33019"/>
        <dbReference type="ChEBI" id="CHEBI:57926"/>
        <dbReference type="ChEBI" id="CHEBI:78442"/>
        <dbReference type="ChEBI" id="CHEBI:78534"/>
        <dbReference type="ChEBI" id="CHEBI:456215"/>
        <dbReference type="EC" id="6.1.1.3"/>
    </reaction>
</comment>
<comment type="cofactor">
    <cofactor evidence="1">
        <name>Zn(2+)</name>
        <dbReference type="ChEBI" id="CHEBI:29105"/>
    </cofactor>
    <text evidence="1">Binds 1 zinc ion per subunit.</text>
</comment>
<comment type="subunit">
    <text evidence="1">Homodimer.</text>
</comment>
<comment type="subcellular location">
    <subcellularLocation>
        <location evidence="1">Cytoplasm</location>
    </subcellularLocation>
</comment>
<comment type="similarity">
    <text evidence="1">Belongs to the class-II aminoacyl-tRNA synthetase family.</text>
</comment>
<dbReference type="EC" id="6.1.1.3" evidence="1"/>
<dbReference type="EMBL" id="CP000026">
    <property type="protein sequence ID" value="AAV77444.1"/>
    <property type="molecule type" value="Genomic_DNA"/>
</dbReference>
<dbReference type="RefSeq" id="WP_001144225.1">
    <property type="nucleotide sequence ID" value="NC_006511.1"/>
</dbReference>
<dbReference type="SMR" id="Q5PH96"/>
<dbReference type="KEGG" id="spt:SPA1511"/>
<dbReference type="HOGENOM" id="CLU_008554_0_1_6"/>
<dbReference type="Proteomes" id="UP000008185">
    <property type="component" value="Chromosome"/>
</dbReference>
<dbReference type="GO" id="GO:0005829">
    <property type="term" value="C:cytosol"/>
    <property type="evidence" value="ECO:0007669"/>
    <property type="project" value="TreeGrafter"/>
</dbReference>
<dbReference type="GO" id="GO:0005524">
    <property type="term" value="F:ATP binding"/>
    <property type="evidence" value="ECO:0007669"/>
    <property type="project" value="UniProtKB-UniRule"/>
</dbReference>
<dbReference type="GO" id="GO:0046872">
    <property type="term" value="F:metal ion binding"/>
    <property type="evidence" value="ECO:0007669"/>
    <property type="project" value="UniProtKB-KW"/>
</dbReference>
<dbReference type="GO" id="GO:0004829">
    <property type="term" value="F:threonine-tRNA ligase activity"/>
    <property type="evidence" value="ECO:0007669"/>
    <property type="project" value="UniProtKB-UniRule"/>
</dbReference>
<dbReference type="GO" id="GO:0000049">
    <property type="term" value="F:tRNA binding"/>
    <property type="evidence" value="ECO:0007669"/>
    <property type="project" value="UniProtKB-KW"/>
</dbReference>
<dbReference type="GO" id="GO:0006435">
    <property type="term" value="P:threonyl-tRNA aminoacylation"/>
    <property type="evidence" value="ECO:0007669"/>
    <property type="project" value="UniProtKB-UniRule"/>
</dbReference>
<dbReference type="CDD" id="cd01667">
    <property type="entry name" value="TGS_ThrRS"/>
    <property type="match status" value="1"/>
</dbReference>
<dbReference type="CDD" id="cd00860">
    <property type="entry name" value="ThrRS_anticodon"/>
    <property type="match status" value="1"/>
</dbReference>
<dbReference type="CDD" id="cd00771">
    <property type="entry name" value="ThrRS_core"/>
    <property type="match status" value="1"/>
</dbReference>
<dbReference type="FunFam" id="3.10.20.30:FF:000005">
    <property type="entry name" value="Threonine--tRNA ligase"/>
    <property type="match status" value="1"/>
</dbReference>
<dbReference type="FunFam" id="3.30.54.20:FF:000002">
    <property type="entry name" value="Threonine--tRNA ligase"/>
    <property type="match status" value="1"/>
</dbReference>
<dbReference type="FunFam" id="3.30.930.10:FF:000002">
    <property type="entry name" value="Threonine--tRNA ligase"/>
    <property type="match status" value="1"/>
</dbReference>
<dbReference type="FunFam" id="3.40.50.800:FF:000001">
    <property type="entry name" value="Threonine--tRNA ligase"/>
    <property type="match status" value="1"/>
</dbReference>
<dbReference type="FunFam" id="3.30.980.10:FF:000005">
    <property type="entry name" value="Threonyl-tRNA synthetase, mitochondrial"/>
    <property type="match status" value="1"/>
</dbReference>
<dbReference type="Gene3D" id="3.10.20.30">
    <property type="match status" value="1"/>
</dbReference>
<dbReference type="Gene3D" id="3.30.54.20">
    <property type="match status" value="1"/>
</dbReference>
<dbReference type="Gene3D" id="3.40.50.800">
    <property type="entry name" value="Anticodon-binding domain"/>
    <property type="match status" value="1"/>
</dbReference>
<dbReference type="Gene3D" id="3.30.930.10">
    <property type="entry name" value="Bira Bifunctional Protein, Domain 2"/>
    <property type="match status" value="1"/>
</dbReference>
<dbReference type="Gene3D" id="3.30.980.10">
    <property type="entry name" value="Threonyl-trna Synthetase, Chain A, domain 2"/>
    <property type="match status" value="1"/>
</dbReference>
<dbReference type="HAMAP" id="MF_00184">
    <property type="entry name" value="Thr_tRNA_synth"/>
    <property type="match status" value="1"/>
</dbReference>
<dbReference type="InterPro" id="IPR002314">
    <property type="entry name" value="aa-tRNA-synt_IIb"/>
</dbReference>
<dbReference type="InterPro" id="IPR006195">
    <property type="entry name" value="aa-tRNA-synth_II"/>
</dbReference>
<dbReference type="InterPro" id="IPR045864">
    <property type="entry name" value="aa-tRNA-synth_II/BPL/LPL"/>
</dbReference>
<dbReference type="InterPro" id="IPR004154">
    <property type="entry name" value="Anticodon-bd"/>
</dbReference>
<dbReference type="InterPro" id="IPR036621">
    <property type="entry name" value="Anticodon-bd_dom_sf"/>
</dbReference>
<dbReference type="InterPro" id="IPR012675">
    <property type="entry name" value="Beta-grasp_dom_sf"/>
</dbReference>
<dbReference type="InterPro" id="IPR004095">
    <property type="entry name" value="TGS"/>
</dbReference>
<dbReference type="InterPro" id="IPR012676">
    <property type="entry name" value="TGS-like"/>
</dbReference>
<dbReference type="InterPro" id="IPR002320">
    <property type="entry name" value="Thr-tRNA-ligase_IIa"/>
</dbReference>
<dbReference type="InterPro" id="IPR018163">
    <property type="entry name" value="Thr/Ala-tRNA-synth_IIc_edit"/>
</dbReference>
<dbReference type="InterPro" id="IPR047246">
    <property type="entry name" value="ThrRS_anticodon"/>
</dbReference>
<dbReference type="InterPro" id="IPR033728">
    <property type="entry name" value="ThrRS_core"/>
</dbReference>
<dbReference type="InterPro" id="IPR012947">
    <property type="entry name" value="tRNA_SAD"/>
</dbReference>
<dbReference type="NCBIfam" id="TIGR00418">
    <property type="entry name" value="thrS"/>
    <property type="match status" value="1"/>
</dbReference>
<dbReference type="PANTHER" id="PTHR11451:SF44">
    <property type="entry name" value="THREONINE--TRNA LIGASE, CHLOROPLASTIC_MITOCHONDRIAL 2"/>
    <property type="match status" value="1"/>
</dbReference>
<dbReference type="PANTHER" id="PTHR11451">
    <property type="entry name" value="THREONINE-TRNA LIGASE"/>
    <property type="match status" value="1"/>
</dbReference>
<dbReference type="Pfam" id="PF03129">
    <property type="entry name" value="HGTP_anticodon"/>
    <property type="match status" value="1"/>
</dbReference>
<dbReference type="Pfam" id="PF02824">
    <property type="entry name" value="TGS"/>
    <property type="match status" value="1"/>
</dbReference>
<dbReference type="Pfam" id="PF00587">
    <property type="entry name" value="tRNA-synt_2b"/>
    <property type="match status" value="1"/>
</dbReference>
<dbReference type="Pfam" id="PF07973">
    <property type="entry name" value="tRNA_SAD"/>
    <property type="match status" value="1"/>
</dbReference>
<dbReference type="PRINTS" id="PR01047">
    <property type="entry name" value="TRNASYNTHTHR"/>
</dbReference>
<dbReference type="SMART" id="SM00863">
    <property type="entry name" value="tRNA_SAD"/>
    <property type="match status" value="1"/>
</dbReference>
<dbReference type="SUPFAM" id="SSF52954">
    <property type="entry name" value="Class II aaRS ABD-related"/>
    <property type="match status" value="1"/>
</dbReference>
<dbReference type="SUPFAM" id="SSF55681">
    <property type="entry name" value="Class II aaRS and biotin synthetases"/>
    <property type="match status" value="1"/>
</dbReference>
<dbReference type="SUPFAM" id="SSF81271">
    <property type="entry name" value="TGS-like"/>
    <property type="match status" value="1"/>
</dbReference>
<dbReference type="SUPFAM" id="SSF55186">
    <property type="entry name" value="ThrRS/AlaRS common domain"/>
    <property type="match status" value="1"/>
</dbReference>
<dbReference type="PROSITE" id="PS50862">
    <property type="entry name" value="AA_TRNA_LIGASE_II"/>
    <property type="match status" value="1"/>
</dbReference>
<dbReference type="PROSITE" id="PS51880">
    <property type="entry name" value="TGS"/>
    <property type="match status" value="1"/>
</dbReference>
<feature type="chain" id="PRO_0000101041" description="Threonine--tRNA ligase">
    <location>
        <begin position="1"/>
        <end position="642"/>
    </location>
</feature>
<feature type="domain" description="TGS" evidence="2">
    <location>
        <begin position="1"/>
        <end position="61"/>
    </location>
</feature>
<feature type="region of interest" description="Catalytic" evidence="1">
    <location>
        <begin position="243"/>
        <end position="534"/>
    </location>
</feature>
<feature type="binding site" evidence="1">
    <location>
        <position position="334"/>
    </location>
    <ligand>
        <name>Zn(2+)</name>
        <dbReference type="ChEBI" id="CHEBI:29105"/>
    </ligand>
</feature>
<feature type="binding site" evidence="1">
    <location>
        <position position="385"/>
    </location>
    <ligand>
        <name>Zn(2+)</name>
        <dbReference type="ChEBI" id="CHEBI:29105"/>
    </ligand>
</feature>
<feature type="binding site" evidence="1">
    <location>
        <position position="511"/>
    </location>
    <ligand>
        <name>Zn(2+)</name>
        <dbReference type="ChEBI" id="CHEBI:29105"/>
    </ligand>
</feature>
<keyword id="KW-0030">Aminoacyl-tRNA synthetase</keyword>
<keyword id="KW-0067">ATP-binding</keyword>
<keyword id="KW-0963">Cytoplasm</keyword>
<keyword id="KW-0436">Ligase</keyword>
<keyword id="KW-0479">Metal-binding</keyword>
<keyword id="KW-0547">Nucleotide-binding</keyword>
<keyword id="KW-0648">Protein biosynthesis</keyword>
<keyword id="KW-0694">RNA-binding</keyword>
<keyword id="KW-0820">tRNA-binding</keyword>
<keyword id="KW-0862">Zinc</keyword>
<protein>
    <recommendedName>
        <fullName evidence="1">Threonine--tRNA ligase</fullName>
        <ecNumber evidence="1">6.1.1.3</ecNumber>
    </recommendedName>
    <alternativeName>
        <fullName evidence="1">Threonyl-tRNA synthetase</fullName>
        <shortName evidence="1">ThrRS</shortName>
    </alternativeName>
</protein>
<sequence>MPVITLPDGSQRHYDHPVSPMDVALDIGPGLAKATIAGRVNGELVDASDLIENDATLSIITAKDEEGLEIIRHSCAHLLGHAIKQLWPHTKMAIGPVVDNGFYYDVDLDRTLTQEDVEALEKRMHELAEKNYDVIKKKVSWHEARETFVKRGESYKVSILDENIAHDDKPGLYHHEEYVDMCRGPHVPNMRFCHHFKLMKTAGAYWRGDSNNKMLQRIYGTAWADKKALNAYLQRLEEAAKRDHRKIGKQLDLYHMQEEAPGMVFWHNDGWTIFRELEVFVRSKLKEYQYQEVKGPFMMDRVLWEKTGHWDNYKDAMFTTSSENREYCIKPMNCPGHVQIFNQGLKSYRDLPLRMAEFGSCHRNEPSGALHGLMRVRGFTQDDAHIFCTEEQIRDEVNACIRMVYDMYSTFGFEKIVVKLSTRPDKRIGSDEMWDRAEADLAVALEENNIPFEYQLGEGAFYGPKIEFTLYDCLDRAWQCGTVQLDFSLPSRLSASYVGEDNERKVPVIIHRAILGSMERFIGILTEEFAGFFPTWLAPVQVVVMNITDSQSEYVNELTQKLQNAGIRVKADLRNEKIGFKIREHTLRRVPYMLVCGDKEVEAGKVAVRTRRGKDLGSLDVNDVIEKLQQEIRSRSLQQLEE</sequence>
<organism>
    <name type="scientific">Salmonella paratyphi A (strain ATCC 9150 / SARB42)</name>
    <dbReference type="NCBI Taxonomy" id="295319"/>
    <lineage>
        <taxon>Bacteria</taxon>
        <taxon>Pseudomonadati</taxon>
        <taxon>Pseudomonadota</taxon>
        <taxon>Gammaproteobacteria</taxon>
        <taxon>Enterobacterales</taxon>
        <taxon>Enterobacteriaceae</taxon>
        <taxon>Salmonella</taxon>
    </lineage>
</organism>
<reference key="1">
    <citation type="journal article" date="2004" name="Nat. Genet.">
        <title>Comparison of genome degradation in Paratyphi A and Typhi, human-restricted serovars of Salmonella enterica that cause typhoid.</title>
        <authorList>
            <person name="McClelland M."/>
            <person name="Sanderson K.E."/>
            <person name="Clifton S.W."/>
            <person name="Latreille P."/>
            <person name="Porwollik S."/>
            <person name="Sabo A."/>
            <person name="Meyer R."/>
            <person name="Bieri T."/>
            <person name="Ozersky P."/>
            <person name="McLellan M."/>
            <person name="Harkins C.R."/>
            <person name="Wang C."/>
            <person name="Nguyen C."/>
            <person name="Berghoff A."/>
            <person name="Elliott G."/>
            <person name="Kohlberg S."/>
            <person name="Strong C."/>
            <person name="Du F."/>
            <person name="Carter J."/>
            <person name="Kremizki C."/>
            <person name="Layman D."/>
            <person name="Leonard S."/>
            <person name="Sun H."/>
            <person name="Fulton L."/>
            <person name="Nash W."/>
            <person name="Miner T."/>
            <person name="Minx P."/>
            <person name="Delehaunty K."/>
            <person name="Fronick C."/>
            <person name="Magrini V."/>
            <person name="Nhan M."/>
            <person name="Warren W."/>
            <person name="Florea L."/>
            <person name="Spieth J."/>
            <person name="Wilson R.K."/>
        </authorList>
    </citation>
    <scope>NUCLEOTIDE SEQUENCE [LARGE SCALE GENOMIC DNA]</scope>
    <source>
        <strain>ATCC 9150 / SARB42</strain>
    </source>
</reference>
<gene>
    <name evidence="1" type="primary">thrS</name>
    <name type="ordered locus">SPA1511</name>
</gene>
<proteinExistence type="inferred from homology"/>